<proteinExistence type="predicted"/>
<dbReference type="EMBL" id="D11476">
    <property type="protein sequence ID" value="BAA02035.1"/>
    <property type="molecule type" value="Genomic_DNA"/>
</dbReference>
<dbReference type="PIR" id="JQ1919">
    <property type="entry name" value="JQ1919"/>
</dbReference>
<dbReference type="SMR" id="P30325"/>
<dbReference type="InterPro" id="IPR009615">
    <property type="entry name" value="Desmo_N"/>
</dbReference>
<dbReference type="Pfam" id="PF06771">
    <property type="entry name" value="Desmo_N"/>
    <property type="match status" value="1"/>
</dbReference>
<organism>
    <name type="scientific">Lymantria dispar multicapsid nuclear polyhedrosis virus</name>
    <name type="common">LdMNPV</name>
    <dbReference type="NCBI Taxonomy" id="10449"/>
    <lineage>
        <taxon>Viruses</taxon>
        <taxon>Viruses incertae sedis</taxon>
        <taxon>Naldaviricetes</taxon>
        <taxon>Lefavirales</taxon>
        <taxon>Baculoviridae</taxon>
        <taxon>Alphabaculovirus</taxon>
        <taxon>Alphabaculovirus lydisparis</taxon>
    </lineage>
</organism>
<protein>
    <recommendedName>
        <fullName>Uncharacterized protein in POL 5'region</fullName>
    </recommendedName>
</protein>
<organismHost>
    <name type="scientific">Lepidoptera</name>
    <name type="common">butterflies and moths</name>
    <dbReference type="NCBI Taxonomy" id="7088"/>
</organismHost>
<reference key="1">
    <citation type="journal article" date="1992" name="J. Gen. Virol.">
        <title>Characterization of the nucleotide sequence of the Lymantria dispar nuclear polyhedrosis virus DNA polymerase gene region.</title>
        <authorList>
            <person name="Bjoernson R.M."/>
            <person name="Glocker B."/>
            <person name="Rohrmann G.F."/>
        </authorList>
    </citation>
    <scope>NUCLEOTIDE SEQUENCE [GENOMIC DNA]</scope>
    <source>
        <strain>Isolate Cl 5-6</strain>
    </source>
</reference>
<reference key="2">
    <citation type="submission" date="1995-10" db="EMBL/GenBank/DDBJ databases">
        <authorList>
            <person name="Rohrmann G.F."/>
        </authorList>
    </citation>
    <scope>SEQUENCE REVISION</scope>
</reference>
<sequence length="369" mass="41045">MASYRYRAPTRYINADVSVDNLLRTIDSMSRQCRSRNETESELARVRSIITLYRPHLQNRVDLQVAELVLEALMPPNGAQEITHNFNYKYDYNTNSGGGAPPPFFPVGPARPTDAFGAPIAPSEPTPASAPSPPKADAPNPIQQNVYINSAGEAARPSSPRPPPPPASGGGAVALMQVDDADELALKNDYDTLTREYTLVSYKRLVRTLVPVSQKYIINDLFVRGLAKLCSVELLLNNDLGALVDCINREAALNIRPDTPDLCRLLVAMIRGFFILASSATRQEYTLARCDSAALVEEEVWSVKTALDQRMSRLADELETARDKLTQTASRLNRAELELRESRETTLMLKRQVEMNEALRRPARFDDEL</sequence>
<evidence type="ECO:0000256" key="1">
    <source>
        <dbReference type="SAM" id="MobiDB-lite"/>
    </source>
</evidence>
<accession>P30325</accession>
<feature type="chain" id="PRO_0000133005" description="Uncharacterized protein in POL 5'region">
    <location>
        <begin position="1"/>
        <end position="369" status="greater than"/>
    </location>
</feature>
<feature type="region of interest" description="Disordered" evidence="1">
    <location>
        <begin position="110"/>
        <end position="172"/>
    </location>
</feature>
<feature type="compositionally biased region" description="Low complexity" evidence="1">
    <location>
        <begin position="110"/>
        <end position="121"/>
    </location>
</feature>
<feature type="compositionally biased region" description="Pro residues" evidence="1">
    <location>
        <begin position="122"/>
        <end position="136"/>
    </location>
</feature>
<feature type="non-terminal residue">
    <location>
        <position position="369"/>
    </location>
</feature>
<name>Y066_NPVLD</name>